<sequence>MAANINNAAAWLTEAKAHPFQVKEAPSYTPEENEILVKNHAVAINPVDGSLQSKAWWPMNYPTILGQDVAGEVVQVGPNVARFQPGDRVVGHAVGMATKRLQDNAFQAYTILQTNMASQLPSEISYEDAAVLPLGLSTAASGLFQDDVGSNAIQLGVAAGYEVFTTASPKNFDYVKELGASQVFDYHSATVAQDLVAALQGKTVAGAMDCIGFAATPLTVEVVSKSQGVKFVSTVKGGFQAPEGVTVKSVFGTTIKDNQVGKAIYEDYLPKALKAGSFIPAPVALVAGKGLESVQAAVDLQAQGTSAQKVVVSL</sequence>
<organism>
    <name type="scientific">Emericella nidulans (strain FGSC A4 / ATCC 38163 / CBS 112.46 / NRRL 194 / M139)</name>
    <name type="common">Aspergillus nidulans</name>
    <dbReference type="NCBI Taxonomy" id="227321"/>
    <lineage>
        <taxon>Eukaryota</taxon>
        <taxon>Fungi</taxon>
        <taxon>Dikarya</taxon>
        <taxon>Ascomycota</taxon>
        <taxon>Pezizomycotina</taxon>
        <taxon>Eurotiomycetes</taxon>
        <taxon>Eurotiomycetidae</taxon>
        <taxon>Eurotiales</taxon>
        <taxon>Aspergillaceae</taxon>
        <taxon>Aspergillus</taxon>
        <taxon>Aspergillus subgen. Nidulantes</taxon>
    </lineage>
</organism>
<dbReference type="EC" id="1.-.-.-"/>
<dbReference type="EMBL" id="AACD01000135">
    <property type="protein sequence ID" value="EAA59549.1"/>
    <property type="molecule type" value="Genomic_DNA"/>
</dbReference>
<dbReference type="EMBL" id="AJ344257">
    <property type="protein sequence ID" value="CAC87271.1"/>
    <property type="molecule type" value="Genomic_DNA"/>
</dbReference>
<dbReference type="EMBL" id="BN001302">
    <property type="protein sequence ID" value="CBF73475.1"/>
    <property type="status" value="ALT_INIT"/>
    <property type="molecule type" value="Genomic_DNA"/>
</dbReference>
<dbReference type="RefSeq" id="XP_681164.1">
    <property type="nucleotide sequence ID" value="XM_676072.1"/>
</dbReference>
<dbReference type="SMR" id="Q5AUY5"/>
<dbReference type="STRING" id="227321.Q5AUY5"/>
<dbReference type="KEGG" id="ani:ANIA_07895"/>
<dbReference type="eggNOG" id="KOG1198">
    <property type="taxonomic scope" value="Eukaryota"/>
</dbReference>
<dbReference type="HOGENOM" id="CLU_026673_16_5_1"/>
<dbReference type="InParanoid" id="Q5AUY5"/>
<dbReference type="OrthoDB" id="48317at2759"/>
<dbReference type="Proteomes" id="UP000000560">
    <property type="component" value="Chromosome II"/>
</dbReference>
<dbReference type="GO" id="GO:0005829">
    <property type="term" value="C:cytosol"/>
    <property type="evidence" value="ECO:0000318"/>
    <property type="project" value="GO_Central"/>
</dbReference>
<dbReference type="GO" id="GO:0035925">
    <property type="term" value="F:mRNA 3'-UTR AU-rich region binding"/>
    <property type="evidence" value="ECO:0000318"/>
    <property type="project" value="GO_Central"/>
</dbReference>
<dbReference type="GO" id="GO:0070402">
    <property type="term" value="F:NADPH binding"/>
    <property type="evidence" value="ECO:0000318"/>
    <property type="project" value="GO_Central"/>
</dbReference>
<dbReference type="GO" id="GO:0003960">
    <property type="term" value="F:NADPH:quinone reductase activity"/>
    <property type="evidence" value="ECO:0000318"/>
    <property type="project" value="GO_Central"/>
</dbReference>
<dbReference type="CDD" id="cd08249">
    <property type="entry name" value="enoyl_reductase_like"/>
    <property type="match status" value="1"/>
</dbReference>
<dbReference type="Gene3D" id="3.90.180.10">
    <property type="entry name" value="Medium-chain alcohol dehydrogenases, catalytic domain"/>
    <property type="match status" value="1"/>
</dbReference>
<dbReference type="Gene3D" id="3.40.50.720">
    <property type="entry name" value="NAD(P)-binding Rossmann-like Domain"/>
    <property type="match status" value="1"/>
</dbReference>
<dbReference type="InterPro" id="IPR013149">
    <property type="entry name" value="ADH-like_C"/>
</dbReference>
<dbReference type="InterPro" id="IPR013154">
    <property type="entry name" value="ADH-like_N"/>
</dbReference>
<dbReference type="InterPro" id="IPR011032">
    <property type="entry name" value="GroES-like_sf"/>
</dbReference>
<dbReference type="InterPro" id="IPR036291">
    <property type="entry name" value="NAD(P)-bd_dom_sf"/>
</dbReference>
<dbReference type="InterPro" id="IPR020843">
    <property type="entry name" value="PKS_ER"/>
</dbReference>
<dbReference type="InterPro" id="IPR047122">
    <property type="entry name" value="Trans-enoyl_RdTase-like"/>
</dbReference>
<dbReference type="PANTHER" id="PTHR45348">
    <property type="entry name" value="HYPOTHETICAL OXIDOREDUCTASE (EUROFUNG)"/>
    <property type="match status" value="1"/>
</dbReference>
<dbReference type="PANTHER" id="PTHR45348:SF2">
    <property type="entry name" value="ZINC-TYPE ALCOHOL DEHYDROGENASE-LIKE PROTEIN C2E1P3.01"/>
    <property type="match status" value="1"/>
</dbReference>
<dbReference type="Pfam" id="PF08240">
    <property type="entry name" value="ADH_N"/>
    <property type="match status" value="1"/>
</dbReference>
<dbReference type="Pfam" id="PF00107">
    <property type="entry name" value="ADH_zinc_N"/>
    <property type="match status" value="1"/>
</dbReference>
<dbReference type="SMART" id="SM00829">
    <property type="entry name" value="PKS_ER"/>
    <property type="match status" value="1"/>
</dbReference>
<dbReference type="SUPFAM" id="SSF50129">
    <property type="entry name" value="GroES-like"/>
    <property type="match status" value="1"/>
</dbReference>
<dbReference type="SUPFAM" id="SSF51735">
    <property type="entry name" value="NAD(P)-binding Rossmann-fold domains"/>
    <property type="match status" value="1"/>
</dbReference>
<keyword id="KW-0560">Oxidoreductase</keyword>
<keyword id="KW-1185">Reference proteome</keyword>
<keyword id="KW-0346">Stress response</keyword>
<name>CIPB_EMENI</name>
<comment type="function">
    <text>Involved in osmoadaptation.</text>
</comment>
<comment type="induction">
    <text evidence="1 2">Induced by the antibiotic concanamycin A. Down-regulated when grown with elevated levels of potassium chloride.</text>
</comment>
<comment type="similarity">
    <text evidence="3">Belongs to the zinc-containing alcohol dehydrogenase family.</text>
</comment>
<comment type="sequence caution" evidence="3">
    <conflict type="erroneous initiation">
        <sequence resource="EMBL-CDS" id="CBF73475"/>
    </conflict>
    <text>Extended N-terminus.</text>
</comment>
<accession>Q5AUY5</accession>
<accession>C8V4J3</accession>
<accession>Q8NKD0</accession>
<feature type="chain" id="PRO_0000363402" description="Zinc-binding alcohol dehydrogenase domain-containing protein cipB">
    <location>
        <begin position="1"/>
        <end position="314"/>
    </location>
</feature>
<feature type="sequence conflict" description="In Ref. 3; CAC87271." evidence="3" ref="3">
    <original>S</original>
    <variation>L</variation>
    <location>
        <position position="141"/>
    </location>
</feature>
<feature type="sequence conflict" description="In Ref. 3; CAC87271." evidence="3" ref="3">
    <original>QDDV</original>
    <variation>RTSF</variation>
    <location>
        <begin position="145"/>
        <end position="148"/>
    </location>
</feature>
<reference key="1">
    <citation type="journal article" date="2005" name="Nature">
        <title>Sequencing of Aspergillus nidulans and comparative analysis with A. fumigatus and A. oryzae.</title>
        <authorList>
            <person name="Galagan J.E."/>
            <person name="Calvo S.E."/>
            <person name="Cuomo C."/>
            <person name="Ma L.-J."/>
            <person name="Wortman J.R."/>
            <person name="Batzoglou S."/>
            <person name="Lee S.-I."/>
            <person name="Bastuerkmen M."/>
            <person name="Spevak C.C."/>
            <person name="Clutterbuck J."/>
            <person name="Kapitonov V."/>
            <person name="Jurka J."/>
            <person name="Scazzocchio C."/>
            <person name="Farman M.L."/>
            <person name="Butler J."/>
            <person name="Purcell S."/>
            <person name="Harris S."/>
            <person name="Braus G.H."/>
            <person name="Draht O."/>
            <person name="Busch S."/>
            <person name="D'Enfert C."/>
            <person name="Bouchier C."/>
            <person name="Goldman G.H."/>
            <person name="Bell-Pedersen D."/>
            <person name="Griffiths-Jones S."/>
            <person name="Doonan J.H."/>
            <person name="Yu J."/>
            <person name="Vienken K."/>
            <person name="Pain A."/>
            <person name="Freitag M."/>
            <person name="Selker E.U."/>
            <person name="Archer D.B."/>
            <person name="Penalva M.A."/>
            <person name="Oakley B.R."/>
            <person name="Momany M."/>
            <person name="Tanaka T."/>
            <person name="Kumagai T."/>
            <person name="Asai K."/>
            <person name="Machida M."/>
            <person name="Nierman W.C."/>
            <person name="Denning D.W."/>
            <person name="Caddick M.X."/>
            <person name="Hynes M."/>
            <person name="Paoletti M."/>
            <person name="Fischer R."/>
            <person name="Miller B.L."/>
            <person name="Dyer P.S."/>
            <person name="Sachs M.S."/>
            <person name="Osmani S.A."/>
            <person name="Birren B.W."/>
        </authorList>
    </citation>
    <scope>NUCLEOTIDE SEQUENCE [LARGE SCALE GENOMIC DNA]</scope>
    <source>
        <strain>FGSC A4 / ATCC 38163 / CBS 112.46 / NRRL 194 / M139</strain>
    </source>
</reference>
<reference key="2">
    <citation type="journal article" date="2009" name="Fungal Genet. Biol.">
        <title>The 2008 update of the Aspergillus nidulans genome annotation: a community effort.</title>
        <authorList>
            <person name="Wortman J.R."/>
            <person name="Gilsenan J.M."/>
            <person name="Joardar V."/>
            <person name="Deegan J."/>
            <person name="Clutterbuck J."/>
            <person name="Andersen M.R."/>
            <person name="Archer D."/>
            <person name="Bencina M."/>
            <person name="Braus G."/>
            <person name="Coutinho P."/>
            <person name="von Dohren H."/>
            <person name="Doonan J."/>
            <person name="Driessen A.J."/>
            <person name="Durek P."/>
            <person name="Espeso E."/>
            <person name="Fekete E."/>
            <person name="Flipphi M."/>
            <person name="Estrada C.G."/>
            <person name="Geysens S."/>
            <person name="Goldman G."/>
            <person name="de Groot P.W."/>
            <person name="Hansen K."/>
            <person name="Harris S.D."/>
            <person name="Heinekamp T."/>
            <person name="Helmstaedt K."/>
            <person name="Henrissat B."/>
            <person name="Hofmann G."/>
            <person name="Homan T."/>
            <person name="Horio T."/>
            <person name="Horiuchi H."/>
            <person name="James S."/>
            <person name="Jones M."/>
            <person name="Karaffa L."/>
            <person name="Karanyi Z."/>
            <person name="Kato M."/>
            <person name="Keller N."/>
            <person name="Kelly D.E."/>
            <person name="Kiel J.A."/>
            <person name="Kim J.M."/>
            <person name="van der Klei I.J."/>
            <person name="Klis F.M."/>
            <person name="Kovalchuk A."/>
            <person name="Krasevec N."/>
            <person name="Kubicek C.P."/>
            <person name="Liu B."/>
            <person name="Maccabe A."/>
            <person name="Meyer V."/>
            <person name="Mirabito P."/>
            <person name="Miskei M."/>
            <person name="Mos M."/>
            <person name="Mullins J."/>
            <person name="Nelson D.R."/>
            <person name="Nielsen J."/>
            <person name="Oakley B.R."/>
            <person name="Osmani S.A."/>
            <person name="Pakula T."/>
            <person name="Paszewski A."/>
            <person name="Paulsen I."/>
            <person name="Pilsyk S."/>
            <person name="Pocsi I."/>
            <person name="Punt P.J."/>
            <person name="Ram A.F."/>
            <person name="Ren Q."/>
            <person name="Robellet X."/>
            <person name="Robson G."/>
            <person name="Seiboth B."/>
            <person name="van Solingen P."/>
            <person name="Specht T."/>
            <person name="Sun J."/>
            <person name="Taheri-Talesh N."/>
            <person name="Takeshita N."/>
            <person name="Ussery D."/>
            <person name="vanKuyk P.A."/>
            <person name="Visser H."/>
            <person name="van de Vondervoort P.J."/>
            <person name="de Vries R.P."/>
            <person name="Walton J."/>
            <person name="Xiang X."/>
            <person name="Xiong Y."/>
            <person name="Zeng A.P."/>
            <person name="Brandt B.W."/>
            <person name="Cornell M.J."/>
            <person name="van den Hondel C.A."/>
            <person name="Visser J."/>
            <person name="Oliver S.G."/>
            <person name="Turner G."/>
        </authorList>
    </citation>
    <scope>GENOME REANNOTATION</scope>
    <source>
        <strain>FGSC A4 / ATCC 38163 / CBS 112.46 / NRRL 194 / M139</strain>
    </source>
</reference>
<reference key="3">
    <citation type="journal article" date="2002" name="Mol. Genet. Genomics">
        <title>Proteome analysis of Aspergillus nidulans reveals proteins associated with the response to the antibiotic concanamycin A, produced by Streptomyces species.</title>
        <authorList>
            <person name="Melin P."/>
            <person name="Schnuerer J."/>
            <person name="Wagner E.G.H."/>
        </authorList>
    </citation>
    <scope>NUCLEOTIDE SEQUENCE [GENOMIC DNA] OF 1-148</scope>
    <scope>INDUCTION</scope>
    <scope>IDENTIFICATION BY MASS SPECTROMETRY</scope>
    <source>
        <strain>FGSC A4 / ATCC 38163 / CBS 112.46 / NRRL 194 / M139</strain>
    </source>
</reference>
<reference key="4">
    <citation type="journal article" date="2007" name="Fungal Genet. Biol.">
        <title>Proteome map of Aspergillus nidulans during osmoadaptation.</title>
        <authorList>
            <person name="Kim Y."/>
            <person name="Nandakumar M.P."/>
            <person name="Marten M.R."/>
        </authorList>
    </citation>
    <scope>INDUCTION</scope>
    <scope>IDENTIFICATION BY MASS SPECTROMETRY</scope>
</reference>
<evidence type="ECO:0000269" key="1">
    <source>
    </source>
</evidence>
<evidence type="ECO:0000269" key="2">
    <source>
    </source>
</evidence>
<evidence type="ECO:0000305" key="3"/>
<protein>
    <recommendedName>
        <fullName>Zinc-binding alcohol dehydrogenase domain-containing protein cipB</fullName>
        <ecNumber>1.-.-.-</ecNumber>
    </recommendedName>
    <alternativeName>
        <fullName>Concanamycin-induced protein B</fullName>
    </alternativeName>
</protein>
<gene>
    <name type="primary">cipB</name>
    <name type="ORF">AN7895</name>
</gene>
<proteinExistence type="evidence at protein level"/>